<accession>A5I310</accession>
<accession>A7G4H0</accession>
<proteinExistence type="inferred from homology"/>
<name>NUSB_CLOBH</name>
<organism>
    <name type="scientific">Clostridium botulinum (strain Hall / ATCC 3502 / NCTC 13319 / Type A)</name>
    <dbReference type="NCBI Taxonomy" id="441771"/>
    <lineage>
        <taxon>Bacteria</taxon>
        <taxon>Bacillati</taxon>
        <taxon>Bacillota</taxon>
        <taxon>Clostridia</taxon>
        <taxon>Eubacteriales</taxon>
        <taxon>Clostridiaceae</taxon>
        <taxon>Clostridium</taxon>
    </lineage>
</organism>
<comment type="function">
    <text evidence="1">Involved in transcription antitermination. Required for transcription of ribosomal RNA (rRNA) genes. Binds specifically to the boxA antiterminator sequence of the ribosomal RNA (rrn) operons.</text>
</comment>
<comment type="similarity">
    <text evidence="1">Belongs to the NusB family.</text>
</comment>
<keyword id="KW-1185">Reference proteome</keyword>
<keyword id="KW-0694">RNA-binding</keyword>
<keyword id="KW-0804">Transcription</keyword>
<keyword id="KW-0889">Transcription antitermination</keyword>
<keyword id="KW-0805">Transcription regulation</keyword>
<protein>
    <recommendedName>
        <fullName evidence="1">Transcription antitermination protein NusB</fullName>
    </recommendedName>
    <alternativeName>
        <fullName evidence="1">Antitermination factor NusB</fullName>
    </alternativeName>
</protein>
<reference key="1">
    <citation type="journal article" date="2007" name="Genome Res.">
        <title>Genome sequence of a proteolytic (Group I) Clostridium botulinum strain Hall A and comparative analysis of the clostridial genomes.</title>
        <authorList>
            <person name="Sebaihia M."/>
            <person name="Peck M.W."/>
            <person name="Minton N.P."/>
            <person name="Thomson N.R."/>
            <person name="Holden M.T.G."/>
            <person name="Mitchell W.J."/>
            <person name="Carter A.T."/>
            <person name="Bentley S.D."/>
            <person name="Mason D.R."/>
            <person name="Crossman L."/>
            <person name="Paul C.J."/>
            <person name="Ivens A."/>
            <person name="Wells-Bennik M.H.J."/>
            <person name="Davis I.J."/>
            <person name="Cerdeno-Tarraga A.M."/>
            <person name="Churcher C."/>
            <person name="Quail M.A."/>
            <person name="Chillingworth T."/>
            <person name="Feltwell T."/>
            <person name="Fraser A."/>
            <person name="Goodhead I."/>
            <person name="Hance Z."/>
            <person name="Jagels K."/>
            <person name="Larke N."/>
            <person name="Maddison M."/>
            <person name="Moule S."/>
            <person name="Mungall K."/>
            <person name="Norbertczak H."/>
            <person name="Rabbinowitsch E."/>
            <person name="Sanders M."/>
            <person name="Simmonds M."/>
            <person name="White B."/>
            <person name="Whithead S."/>
            <person name="Parkhill J."/>
        </authorList>
    </citation>
    <scope>NUCLEOTIDE SEQUENCE [LARGE SCALE GENOMIC DNA]</scope>
    <source>
        <strain>Hall / ATCC 3502 / NCTC 13319 / Type A</strain>
    </source>
</reference>
<reference key="2">
    <citation type="journal article" date="2007" name="PLoS ONE">
        <title>Analysis of the neurotoxin complex genes in Clostridium botulinum A1-A4 and B1 strains: BoNT/A3, /Ba4 and /B1 clusters are located within plasmids.</title>
        <authorList>
            <person name="Smith T.J."/>
            <person name="Hill K.K."/>
            <person name="Foley B.T."/>
            <person name="Detter J.C."/>
            <person name="Munk A.C."/>
            <person name="Bruce D.C."/>
            <person name="Doggett N.A."/>
            <person name="Smith L.A."/>
            <person name="Marks J.D."/>
            <person name="Xie G."/>
            <person name="Brettin T.S."/>
        </authorList>
    </citation>
    <scope>NUCLEOTIDE SEQUENCE [LARGE SCALE GENOMIC DNA]</scope>
    <source>
        <strain>Hall / ATCC 3502 / NCTC 13319 / Type A</strain>
    </source>
</reference>
<dbReference type="EMBL" id="CP000727">
    <property type="protein sequence ID" value="ABS35892.1"/>
    <property type="molecule type" value="Genomic_DNA"/>
</dbReference>
<dbReference type="EMBL" id="AM412317">
    <property type="protein sequence ID" value="CAL83427.1"/>
    <property type="molecule type" value="Genomic_DNA"/>
</dbReference>
<dbReference type="RefSeq" id="WP_003358828.1">
    <property type="nucleotide sequence ID" value="NC_009698.1"/>
</dbReference>
<dbReference type="RefSeq" id="YP_001254388.1">
    <property type="nucleotide sequence ID" value="NC_009495.1"/>
</dbReference>
<dbReference type="RefSeq" id="YP_001387685.1">
    <property type="nucleotide sequence ID" value="NC_009698.1"/>
</dbReference>
<dbReference type="SMR" id="A5I310"/>
<dbReference type="GeneID" id="5186053"/>
<dbReference type="KEGG" id="cbh:CLC_1830"/>
<dbReference type="KEGG" id="cbo:CBO1886"/>
<dbReference type="PATRIC" id="fig|413999.7.peg.1858"/>
<dbReference type="HOGENOM" id="CLU_087843_3_1_9"/>
<dbReference type="PRO" id="PR:A5I310"/>
<dbReference type="Proteomes" id="UP000001986">
    <property type="component" value="Chromosome"/>
</dbReference>
<dbReference type="GO" id="GO:0005829">
    <property type="term" value="C:cytosol"/>
    <property type="evidence" value="ECO:0000318"/>
    <property type="project" value="GO_Central"/>
</dbReference>
<dbReference type="GO" id="GO:0003723">
    <property type="term" value="F:RNA binding"/>
    <property type="evidence" value="ECO:0007669"/>
    <property type="project" value="UniProtKB-UniRule"/>
</dbReference>
<dbReference type="GO" id="GO:0006353">
    <property type="term" value="P:DNA-templated transcription termination"/>
    <property type="evidence" value="ECO:0007669"/>
    <property type="project" value="UniProtKB-UniRule"/>
</dbReference>
<dbReference type="GO" id="GO:0031564">
    <property type="term" value="P:transcription antitermination"/>
    <property type="evidence" value="ECO:0007669"/>
    <property type="project" value="UniProtKB-KW"/>
</dbReference>
<dbReference type="FunFam" id="1.10.940.10:FF:000003">
    <property type="entry name" value="Transcription antitermination factor NusB"/>
    <property type="match status" value="1"/>
</dbReference>
<dbReference type="Gene3D" id="1.10.940.10">
    <property type="entry name" value="NusB-like"/>
    <property type="match status" value="1"/>
</dbReference>
<dbReference type="HAMAP" id="MF_00073">
    <property type="entry name" value="NusB"/>
    <property type="match status" value="1"/>
</dbReference>
<dbReference type="InterPro" id="IPR035926">
    <property type="entry name" value="NusB-like_sf"/>
</dbReference>
<dbReference type="InterPro" id="IPR011605">
    <property type="entry name" value="NusB_fam"/>
</dbReference>
<dbReference type="InterPro" id="IPR006027">
    <property type="entry name" value="NusB_RsmB_TIM44"/>
</dbReference>
<dbReference type="NCBIfam" id="TIGR01951">
    <property type="entry name" value="nusB"/>
    <property type="match status" value="1"/>
</dbReference>
<dbReference type="PANTHER" id="PTHR11078:SF3">
    <property type="entry name" value="ANTITERMINATION NUSB DOMAIN-CONTAINING PROTEIN"/>
    <property type="match status" value="1"/>
</dbReference>
<dbReference type="PANTHER" id="PTHR11078">
    <property type="entry name" value="N UTILIZATION SUBSTANCE PROTEIN B-RELATED"/>
    <property type="match status" value="1"/>
</dbReference>
<dbReference type="Pfam" id="PF01029">
    <property type="entry name" value="NusB"/>
    <property type="match status" value="1"/>
</dbReference>
<dbReference type="SUPFAM" id="SSF48013">
    <property type="entry name" value="NusB-like"/>
    <property type="match status" value="1"/>
</dbReference>
<feature type="chain" id="PRO_1000023729" description="Transcription antitermination protein NusB">
    <location>
        <begin position="1"/>
        <end position="143"/>
    </location>
</feature>
<gene>
    <name evidence="1" type="primary">nusB</name>
    <name type="ordered locus">CBO1886</name>
    <name type="ordered locus">CLC_1830</name>
</gene>
<sequence>MNRRKSREVAMRLLFQTTLNGENLEEALENLKDVRESEEITKEKDYESVDLKDVDIDYVKRIIKGIEENKEEIDEKIKGNLKNWKIERLSKVDLSILRLCTYELKFEEDIPNRVSVNEAIELAKKYSGEKSATFINGVLGKMI</sequence>
<evidence type="ECO:0000255" key="1">
    <source>
        <dbReference type="HAMAP-Rule" id="MF_00073"/>
    </source>
</evidence>